<proteinExistence type="inferred from homology"/>
<sequence>MRLNTLSPAEGSKKAGKRLGRGIGSGLGKTGGRGHKGQKSRSGGGVRRGFEGGQMPLYRRLPKFGFTSRKAAITAEVRLSDLAKVEGGVVDLNTLKAANIIGIQIEFAKVILAGEVTTPVTVRGLRVTKGARAAIEAAGGKIEE</sequence>
<keyword id="KW-1185">Reference proteome</keyword>
<keyword id="KW-0687">Ribonucleoprotein</keyword>
<keyword id="KW-0689">Ribosomal protein</keyword>
<keyword id="KW-0694">RNA-binding</keyword>
<keyword id="KW-0699">rRNA-binding</keyword>
<accession>Q3YWV8</accession>
<reference key="1">
    <citation type="journal article" date="2005" name="Nucleic Acids Res.">
        <title>Genome dynamics and diversity of Shigella species, the etiologic agents of bacillary dysentery.</title>
        <authorList>
            <person name="Yang F."/>
            <person name="Yang J."/>
            <person name="Zhang X."/>
            <person name="Chen L."/>
            <person name="Jiang Y."/>
            <person name="Yan Y."/>
            <person name="Tang X."/>
            <person name="Wang J."/>
            <person name="Xiong Z."/>
            <person name="Dong J."/>
            <person name="Xue Y."/>
            <person name="Zhu Y."/>
            <person name="Xu X."/>
            <person name="Sun L."/>
            <person name="Chen S."/>
            <person name="Nie H."/>
            <person name="Peng J."/>
            <person name="Xu J."/>
            <person name="Wang Y."/>
            <person name="Yuan Z."/>
            <person name="Wen Y."/>
            <person name="Yao Z."/>
            <person name="Shen Y."/>
            <person name="Qiang B."/>
            <person name="Hou Y."/>
            <person name="Yu J."/>
            <person name="Jin Q."/>
        </authorList>
    </citation>
    <scope>NUCLEOTIDE SEQUENCE [LARGE SCALE GENOMIC DNA]</scope>
    <source>
        <strain>Ss046</strain>
    </source>
</reference>
<dbReference type="EMBL" id="CP000038">
    <property type="protein sequence ID" value="AAZ90004.1"/>
    <property type="molecule type" value="Genomic_DNA"/>
</dbReference>
<dbReference type="RefSeq" id="WP_001238917.1">
    <property type="nucleotide sequence ID" value="NC_007384.1"/>
</dbReference>
<dbReference type="SMR" id="Q3YWV8"/>
<dbReference type="GeneID" id="93778686"/>
<dbReference type="KEGG" id="ssn:SSON_3442"/>
<dbReference type="HOGENOM" id="CLU_055188_4_2_6"/>
<dbReference type="Proteomes" id="UP000002529">
    <property type="component" value="Chromosome"/>
</dbReference>
<dbReference type="GO" id="GO:0022625">
    <property type="term" value="C:cytosolic large ribosomal subunit"/>
    <property type="evidence" value="ECO:0007669"/>
    <property type="project" value="TreeGrafter"/>
</dbReference>
<dbReference type="GO" id="GO:0019843">
    <property type="term" value="F:rRNA binding"/>
    <property type="evidence" value="ECO:0007669"/>
    <property type="project" value="UniProtKB-UniRule"/>
</dbReference>
<dbReference type="GO" id="GO:0003735">
    <property type="term" value="F:structural constituent of ribosome"/>
    <property type="evidence" value="ECO:0007669"/>
    <property type="project" value="InterPro"/>
</dbReference>
<dbReference type="GO" id="GO:0006412">
    <property type="term" value="P:translation"/>
    <property type="evidence" value="ECO:0007669"/>
    <property type="project" value="UniProtKB-UniRule"/>
</dbReference>
<dbReference type="FunFam" id="3.100.10.10:FF:000003">
    <property type="entry name" value="50S ribosomal protein L15"/>
    <property type="match status" value="1"/>
</dbReference>
<dbReference type="Gene3D" id="3.100.10.10">
    <property type="match status" value="1"/>
</dbReference>
<dbReference type="HAMAP" id="MF_01341">
    <property type="entry name" value="Ribosomal_uL15"/>
    <property type="match status" value="1"/>
</dbReference>
<dbReference type="InterPro" id="IPR030878">
    <property type="entry name" value="Ribosomal_uL15"/>
</dbReference>
<dbReference type="InterPro" id="IPR021131">
    <property type="entry name" value="Ribosomal_uL15/eL18"/>
</dbReference>
<dbReference type="InterPro" id="IPR036227">
    <property type="entry name" value="Ribosomal_uL15/eL18_sf"/>
</dbReference>
<dbReference type="InterPro" id="IPR005749">
    <property type="entry name" value="Ribosomal_uL15_bac-type"/>
</dbReference>
<dbReference type="InterPro" id="IPR001196">
    <property type="entry name" value="Ribosomal_uL15_CS"/>
</dbReference>
<dbReference type="NCBIfam" id="TIGR01071">
    <property type="entry name" value="rplO_bact"/>
    <property type="match status" value="1"/>
</dbReference>
<dbReference type="PANTHER" id="PTHR12934">
    <property type="entry name" value="50S RIBOSOMAL PROTEIN L15"/>
    <property type="match status" value="1"/>
</dbReference>
<dbReference type="PANTHER" id="PTHR12934:SF11">
    <property type="entry name" value="LARGE RIBOSOMAL SUBUNIT PROTEIN UL15M"/>
    <property type="match status" value="1"/>
</dbReference>
<dbReference type="Pfam" id="PF00828">
    <property type="entry name" value="Ribosomal_L27A"/>
    <property type="match status" value="1"/>
</dbReference>
<dbReference type="SUPFAM" id="SSF52080">
    <property type="entry name" value="Ribosomal proteins L15p and L18e"/>
    <property type="match status" value="1"/>
</dbReference>
<dbReference type="PROSITE" id="PS00475">
    <property type="entry name" value="RIBOSOMAL_L15"/>
    <property type="match status" value="1"/>
</dbReference>
<gene>
    <name evidence="1" type="primary">rplO</name>
    <name type="ordered locus">SSON_3442</name>
</gene>
<feature type="chain" id="PRO_0000251562" description="Large ribosomal subunit protein uL15">
    <location>
        <begin position="1"/>
        <end position="144"/>
    </location>
</feature>
<feature type="region of interest" description="Disordered" evidence="2">
    <location>
        <begin position="1"/>
        <end position="54"/>
    </location>
</feature>
<feature type="compositionally biased region" description="Gly residues" evidence="2">
    <location>
        <begin position="21"/>
        <end position="31"/>
    </location>
</feature>
<comment type="function">
    <text evidence="1">Binds to the 23S rRNA.</text>
</comment>
<comment type="subunit">
    <text evidence="1">Part of the 50S ribosomal subunit.</text>
</comment>
<comment type="similarity">
    <text evidence="1">Belongs to the universal ribosomal protein uL15 family.</text>
</comment>
<organism>
    <name type="scientific">Shigella sonnei (strain Ss046)</name>
    <dbReference type="NCBI Taxonomy" id="300269"/>
    <lineage>
        <taxon>Bacteria</taxon>
        <taxon>Pseudomonadati</taxon>
        <taxon>Pseudomonadota</taxon>
        <taxon>Gammaproteobacteria</taxon>
        <taxon>Enterobacterales</taxon>
        <taxon>Enterobacteriaceae</taxon>
        <taxon>Shigella</taxon>
    </lineage>
</organism>
<name>RL15_SHISS</name>
<protein>
    <recommendedName>
        <fullName evidence="1">Large ribosomal subunit protein uL15</fullName>
    </recommendedName>
    <alternativeName>
        <fullName evidence="3">50S ribosomal protein L15</fullName>
    </alternativeName>
</protein>
<evidence type="ECO:0000255" key="1">
    <source>
        <dbReference type="HAMAP-Rule" id="MF_01341"/>
    </source>
</evidence>
<evidence type="ECO:0000256" key="2">
    <source>
        <dbReference type="SAM" id="MobiDB-lite"/>
    </source>
</evidence>
<evidence type="ECO:0000305" key="3"/>